<comment type="function">
    <text evidence="1">Catalyzes the oxidation of 5,10-methylenetetrahydrofolate to 5,10-methenyltetrahydrofolate and then the hydrolysis of 5,10-methenyltetrahydrofolate to 10-formyltetrahydrofolate.</text>
</comment>
<comment type="catalytic activity">
    <reaction evidence="1">
        <text>(6R)-5,10-methylene-5,6,7,8-tetrahydrofolate + NADP(+) = (6R)-5,10-methenyltetrahydrofolate + NADPH</text>
        <dbReference type="Rhea" id="RHEA:22812"/>
        <dbReference type="ChEBI" id="CHEBI:15636"/>
        <dbReference type="ChEBI" id="CHEBI:57455"/>
        <dbReference type="ChEBI" id="CHEBI:57783"/>
        <dbReference type="ChEBI" id="CHEBI:58349"/>
        <dbReference type="EC" id="1.5.1.5"/>
    </reaction>
</comment>
<comment type="catalytic activity">
    <reaction evidence="1">
        <text>(6R)-5,10-methenyltetrahydrofolate + H2O = (6R)-10-formyltetrahydrofolate + H(+)</text>
        <dbReference type="Rhea" id="RHEA:23700"/>
        <dbReference type="ChEBI" id="CHEBI:15377"/>
        <dbReference type="ChEBI" id="CHEBI:15378"/>
        <dbReference type="ChEBI" id="CHEBI:57455"/>
        <dbReference type="ChEBI" id="CHEBI:195366"/>
        <dbReference type="EC" id="3.5.4.9"/>
    </reaction>
</comment>
<comment type="pathway">
    <text evidence="1">One-carbon metabolism; tetrahydrofolate interconversion.</text>
</comment>
<comment type="subunit">
    <text evidence="1">Homodimer.</text>
</comment>
<comment type="similarity">
    <text evidence="1">Belongs to the tetrahydrofolate dehydrogenase/cyclohydrolase family.</text>
</comment>
<evidence type="ECO:0000255" key="1">
    <source>
        <dbReference type="HAMAP-Rule" id="MF_01576"/>
    </source>
</evidence>
<accession>C0R292</accession>
<organism>
    <name type="scientific">Brachyspira hyodysenteriae (strain ATCC 49526 / WA1)</name>
    <dbReference type="NCBI Taxonomy" id="565034"/>
    <lineage>
        <taxon>Bacteria</taxon>
        <taxon>Pseudomonadati</taxon>
        <taxon>Spirochaetota</taxon>
        <taxon>Spirochaetia</taxon>
        <taxon>Brachyspirales</taxon>
        <taxon>Brachyspiraceae</taxon>
        <taxon>Brachyspira</taxon>
    </lineage>
</organism>
<name>FOLD_BRAHW</name>
<gene>
    <name evidence="1" type="primary">folD</name>
    <name type="ordered locus">BHWA1_01765</name>
</gene>
<keyword id="KW-0028">Amino-acid biosynthesis</keyword>
<keyword id="KW-0368">Histidine biosynthesis</keyword>
<keyword id="KW-0378">Hydrolase</keyword>
<keyword id="KW-0486">Methionine biosynthesis</keyword>
<keyword id="KW-0511">Multifunctional enzyme</keyword>
<keyword id="KW-0521">NADP</keyword>
<keyword id="KW-0554">One-carbon metabolism</keyword>
<keyword id="KW-0560">Oxidoreductase</keyword>
<keyword id="KW-0658">Purine biosynthesis</keyword>
<feature type="chain" id="PRO_1000185598" description="Bifunctional protein FolD">
    <location>
        <begin position="1"/>
        <end position="281"/>
    </location>
</feature>
<feature type="binding site" evidence="1">
    <location>
        <begin position="161"/>
        <end position="163"/>
    </location>
    <ligand>
        <name>NADP(+)</name>
        <dbReference type="ChEBI" id="CHEBI:58349"/>
    </ligand>
</feature>
<feature type="binding site" evidence="1">
    <location>
        <position position="186"/>
    </location>
    <ligand>
        <name>NADP(+)</name>
        <dbReference type="ChEBI" id="CHEBI:58349"/>
    </ligand>
</feature>
<feature type="binding site" evidence="1">
    <location>
        <position position="227"/>
    </location>
    <ligand>
        <name>NADP(+)</name>
        <dbReference type="ChEBI" id="CHEBI:58349"/>
    </ligand>
</feature>
<proteinExistence type="inferred from homology"/>
<protein>
    <recommendedName>
        <fullName evidence="1">Bifunctional protein FolD</fullName>
    </recommendedName>
    <domain>
        <recommendedName>
            <fullName evidence="1">Methylenetetrahydrofolate dehydrogenase</fullName>
            <ecNumber evidence="1">1.5.1.5</ecNumber>
        </recommendedName>
    </domain>
    <domain>
        <recommendedName>
            <fullName evidence="1">Methenyltetrahydrofolate cyclohydrolase</fullName>
            <ecNumber evidence="1">3.5.4.9</ecNumber>
        </recommendedName>
    </domain>
</protein>
<reference key="1">
    <citation type="journal article" date="2009" name="PLoS ONE">
        <title>Genome sequence of the pathogenic intestinal spirochete Brachyspira hyodysenteriae reveals adaptations to its lifestyle in the porcine large intestine.</title>
        <authorList>
            <person name="Bellgard M.I."/>
            <person name="Wanchanthuek P."/>
            <person name="La T."/>
            <person name="Ryan K."/>
            <person name="Moolhuijzen P."/>
            <person name="Albertyn Z."/>
            <person name="Shaban B."/>
            <person name="Motro Y."/>
            <person name="Dunn D.S."/>
            <person name="Schibeci D."/>
            <person name="Hunter A."/>
            <person name="Barrero R."/>
            <person name="Phillips N.D."/>
            <person name="Hampson D.J."/>
        </authorList>
    </citation>
    <scope>NUCLEOTIDE SEQUENCE [LARGE SCALE GENOMIC DNA]</scope>
    <source>
        <strain>ATCC 49526 / WA1</strain>
    </source>
</reference>
<sequence length="281" mass="30888">MSNILDGRELAKEIKERIKKETEILEKKPRIDFLYFEDDKSTEVYFTRAKKQAESVGMIGSLHNLPVNTTEKDFLTLIEYLNEESETSGIMIQMPLPKHISKKKVYETISIEKDADAISHVNLGRIFIGDSNLAPCTAKSAMALIEKSGINIEGANAVVIGRSEIVGKPLAHLLLQKSATVTIAHSKTKNLKELCKNADILCVSIGKAEFITGEYIKEGAVVIDVGINVLEDGSLKGDVNFEEASKLASYITPVPNGVGSVTVSMLLDNVLYLHKNIINKK</sequence>
<dbReference type="EC" id="1.5.1.5" evidence="1"/>
<dbReference type="EC" id="3.5.4.9" evidence="1"/>
<dbReference type="EMBL" id="CP001357">
    <property type="protein sequence ID" value="ACN84230.1"/>
    <property type="molecule type" value="Genomic_DNA"/>
</dbReference>
<dbReference type="RefSeq" id="WP_012671270.1">
    <property type="nucleotide sequence ID" value="NC_012225.1"/>
</dbReference>
<dbReference type="SMR" id="C0R292"/>
<dbReference type="STRING" id="565034.BHWA1_01765"/>
<dbReference type="GeneID" id="63962862"/>
<dbReference type="KEGG" id="bhy:BHWA1_01765"/>
<dbReference type="eggNOG" id="COG0190">
    <property type="taxonomic scope" value="Bacteria"/>
</dbReference>
<dbReference type="HOGENOM" id="CLU_034045_2_1_12"/>
<dbReference type="UniPathway" id="UPA00193"/>
<dbReference type="Proteomes" id="UP000001803">
    <property type="component" value="Chromosome"/>
</dbReference>
<dbReference type="GO" id="GO:0005829">
    <property type="term" value="C:cytosol"/>
    <property type="evidence" value="ECO:0007669"/>
    <property type="project" value="TreeGrafter"/>
</dbReference>
<dbReference type="GO" id="GO:0004477">
    <property type="term" value="F:methenyltetrahydrofolate cyclohydrolase activity"/>
    <property type="evidence" value="ECO:0007669"/>
    <property type="project" value="UniProtKB-UniRule"/>
</dbReference>
<dbReference type="GO" id="GO:0004488">
    <property type="term" value="F:methylenetetrahydrofolate dehydrogenase (NADP+) activity"/>
    <property type="evidence" value="ECO:0007669"/>
    <property type="project" value="UniProtKB-UniRule"/>
</dbReference>
<dbReference type="GO" id="GO:0000105">
    <property type="term" value="P:L-histidine biosynthetic process"/>
    <property type="evidence" value="ECO:0007669"/>
    <property type="project" value="UniProtKB-KW"/>
</dbReference>
<dbReference type="GO" id="GO:0009086">
    <property type="term" value="P:methionine biosynthetic process"/>
    <property type="evidence" value="ECO:0007669"/>
    <property type="project" value="UniProtKB-KW"/>
</dbReference>
<dbReference type="GO" id="GO:0006164">
    <property type="term" value="P:purine nucleotide biosynthetic process"/>
    <property type="evidence" value="ECO:0007669"/>
    <property type="project" value="UniProtKB-KW"/>
</dbReference>
<dbReference type="GO" id="GO:0035999">
    <property type="term" value="P:tetrahydrofolate interconversion"/>
    <property type="evidence" value="ECO:0007669"/>
    <property type="project" value="UniProtKB-UniRule"/>
</dbReference>
<dbReference type="CDD" id="cd01080">
    <property type="entry name" value="NAD_bind_m-THF_DH_Cyclohyd"/>
    <property type="match status" value="1"/>
</dbReference>
<dbReference type="FunFam" id="3.40.50.720:FF:000006">
    <property type="entry name" value="Bifunctional protein FolD"/>
    <property type="match status" value="1"/>
</dbReference>
<dbReference type="Gene3D" id="3.40.50.10860">
    <property type="entry name" value="Leucine Dehydrogenase, chain A, domain 1"/>
    <property type="match status" value="1"/>
</dbReference>
<dbReference type="Gene3D" id="3.40.50.720">
    <property type="entry name" value="NAD(P)-binding Rossmann-like Domain"/>
    <property type="match status" value="1"/>
</dbReference>
<dbReference type="HAMAP" id="MF_01576">
    <property type="entry name" value="THF_DHG_CYH"/>
    <property type="match status" value="1"/>
</dbReference>
<dbReference type="InterPro" id="IPR046346">
    <property type="entry name" value="Aminoacid_DH-like_N_sf"/>
</dbReference>
<dbReference type="InterPro" id="IPR036291">
    <property type="entry name" value="NAD(P)-bd_dom_sf"/>
</dbReference>
<dbReference type="InterPro" id="IPR000672">
    <property type="entry name" value="THF_DH/CycHdrlase"/>
</dbReference>
<dbReference type="InterPro" id="IPR020630">
    <property type="entry name" value="THF_DH/CycHdrlase_cat_dom"/>
</dbReference>
<dbReference type="InterPro" id="IPR020631">
    <property type="entry name" value="THF_DH/CycHdrlase_NAD-bd_dom"/>
</dbReference>
<dbReference type="PANTHER" id="PTHR48099:SF5">
    <property type="entry name" value="C-1-TETRAHYDROFOLATE SYNTHASE, CYTOPLASMIC"/>
    <property type="match status" value="1"/>
</dbReference>
<dbReference type="PANTHER" id="PTHR48099">
    <property type="entry name" value="C-1-TETRAHYDROFOLATE SYNTHASE, CYTOPLASMIC-RELATED"/>
    <property type="match status" value="1"/>
</dbReference>
<dbReference type="Pfam" id="PF00763">
    <property type="entry name" value="THF_DHG_CYH"/>
    <property type="match status" value="1"/>
</dbReference>
<dbReference type="Pfam" id="PF02882">
    <property type="entry name" value="THF_DHG_CYH_C"/>
    <property type="match status" value="1"/>
</dbReference>
<dbReference type="PRINTS" id="PR00085">
    <property type="entry name" value="THFDHDRGNASE"/>
</dbReference>
<dbReference type="SUPFAM" id="SSF53223">
    <property type="entry name" value="Aminoacid dehydrogenase-like, N-terminal domain"/>
    <property type="match status" value="1"/>
</dbReference>
<dbReference type="SUPFAM" id="SSF51735">
    <property type="entry name" value="NAD(P)-binding Rossmann-fold domains"/>
    <property type="match status" value="1"/>
</dbReference>